<evidence type="ECO:0000255" key="1">
    <source>
        <dbReference type="HAMAP-Rule" id="MF_01326"/>
    </source>
</evidence>
<evidence type="ECO:0000305" key="2"/>
<reference key="1">
    <citation type="journal article" date="2006" name="J. Bacteriol.">
        <title>Pathogenomic sequence analysis of Bacillus cereus and Bacillus thuringiensis isolates closely related to Bacillus anthracis.</title>
        <authorList>
            <person name="Han C.S."/>
            <person name="Xie G."/>
            <person name="Challacombe J.F."/>
            <person name="Altherr M.R."/>
            <person name="Bhotika S.S."/>
            <person name="Bruce D."/>
            <person name="Campbell C.S."/>
            <person name="Campbell M.L."/>
            <person name="Chen J."/>
            <person name="Chertkov O."/>
            <person name="Cleland C."/>
            <person name="Dimitrijevic M."/>
            <person name="Doggett N.A."/>
            <person name="Fawcett J.J."/>
            <person name="Glavina T."/>
            <person name="Goodwin L.A."/>
            <person name="Hill K.K."/>
            <person name="Hitchcock P."/>
            <person name="Jackson P.J."/>
            <person name="Keim P."/>
            <person name="Kewalramani A.R."/>
            <person name="Longmire J."/>
            <person name="Lucas S."/>
            <person name="Malfatti S."/>
            <person name="McMurry K."/>
            <person name="Meincke L.J."/>
            <person name="Misra M."/>
            <person name="Moseman B.L."/>
            <person name="Mundt M."/>
            <person name="Munk A.C."/>
            <person name="Okinaka R.T."/>
            <person name="Parson-Quintana B."/>
            <person name="Reilly L.P."/>
            <person name="Richardson P."/>
            <person name="Robinson D.L."/>
            <person name="Rubin E."/>
            <person name="Saunders E."/>
            <person name="Tapia R."/>
            <person name="Tesmer J.G."/>
            <person name="Thayer N."/>
            <person name="Thompson L.S."/>
            <person name="Tice H."/>
            <person name="Ticknor L.O."/>
            <person name="Wills P.L."/>
            <person name="Brettin T.S."/>
            <person name="Gilna P."/>
        </authorList>
    </citation>
    <scope>NUCLEOTIDE SEQUENCE [LARGE SCALE GENOMIC DNA]</scope>
    <source>
        <strain>ZK / E33L</strain>
    </source>
</reference>
<comment type="function">
    <text evidence="1">One of two assembly initiator proteins, it binds directly to the 5'-end of the 23S rRNA, where it nucleates assembly of the 50S subunit.</text>
</comment>
<comment type="function">
    <text evidence="1">One of the proteins that surrounds the polypeptide exit tunnel on the outside of the subunit.</text>
</comment>
<comment type="subunit">
    <text evidence="1">Part of the 50S ribosomal subunit.</text>
</comment>
<comment type="similarity">
    <text evidence="1">Belongs to the universal ribosomal protein uL24 family.</text>
</comment>
<protein>
    <recommendedName>
        <fullName evidence="1">Large ribosomal subunit protein uL24</fullName>
    </recommendedName>
    <alternativeName>
        <fullName evidence="2">50S ribosomal protein L24</fullName>
    </alternativeName>
</protein>
<dbReference type="EMBL" id="CP000001">
    <property type="protein sequence ID" value="AAU20112.1"/>
    <property type="molecule type" value="Genomic_DNA"/>
</dbReference>
<dbReference type="RefSeq" id="WP_000558200.1">
    <property type="nucleotide sequence ID" value="NZ_CP009968.1"/>
</dbReference>
<dbReference type="SMR" id="Q63H79"/>
<dbReference type="GeneID" id="93010932"/>
<dbReference type="KEGG" id="bcz:BCE33L0115"/>
<dbReference type="PATRIC" id="fig|288681.22.peg.36"/>
<dbReference type="Proteomes" id="UP000002612">
    <property type="component" value="Chromosome"/>
</dbReference>
<dbReference type="GO" id="GO:1990904">
    <property type="term" value="C:ribonucleoprotein complex"/>
    <property type="evidence" value="ECO:0007669"/>
    <property type="project" value="UniProtKB-KW"/>
</dbReference>
<dbReference type="GO" id="GO:0005840">
    <property type="term" value="C:ribosome"/>
    <property type="evidence" value="ECO:0007669"/>
    <property type="project" value="UniProtKB-KW"/>
</dbReference>
<dbReference type="GO" id="GO:0019843">
    <property type="term" value="F:rRNA binding"/>
    <property type="evidence" value="ECO:0007669"/>
    <property type="project" value="UniProtKB-UniRule"/>
</dbReference>
<dbReference type="GO" id="GO:0003735">
    <property type="term" value="F:structural constituent of ribosome"/>
    <property type="evidence" value="ECO:0007669"/>
    <property type="project" value="InterPro"/>
</dbReference>
<dbReference type="GO" id="GO:0006412">
    <property type="term" value="P:translation"/>
    <property type="evidence" value="ECO:0007669"/>
    <property type="project" value="UniProtKB-UniRule"/>
</dbReference>
<dbReference type="CDD" id="cd06089">
    <property type="entry name" value="KOW_RPL26"/>
    <property type="match status" value="1"/>
</dbReference>
<dbReference type="FunFam" id="2.30.30.30:FF:000004">
    <property type="entry name" value="50S ribosomal protein L24"/>
    <property type="match status" value="1"/>
</dbReference>
<dbReference type="Gene3D" id="2.30.30.30">
    <property type="match status" value="1"/>
</dbReference>
<dbReference type="HAMAP" id="MF_01326_B">
    <property type="entry name" value="Ribosomal_uL24_B"/>
    <property type="match status" value="1"/>
</dbReference>
<dbReference type="InterPro" id="IPR005824">
    <property type="entry name" value="KOW"/>
</dbReference>
<dbReference type="InterPro" id="IPR014722">
    <property type="entry name" value="Rib_uL2_dom2"/>
</dbReference>
<dbReference type="InterPro" id="IPR003256">
    <property type="entry name" value="Ribosomal_uL24"/>
</dbReference>
<dbReference type="InterPro" id="IPR005825">
    <property type="entry name" value="Ribosomal_uL24_CS"/>
</dbReference>
<dbReference type="InterPro" id="IPR041988">
    <property type="entry name" value="Ribosomal_uL24_KOW"/>
</dbReference>
<dbReference type="InterPro" id="IPR008991">
    <property type="entry name" value="Translation_prot_SH3-like_sf"/>
</dbReference>
<dbReference type="NCBIfam" id="TIGR01079">
    <property type="entry name" value="rplX_bact"/>
    <property type="match status" value="1"/>
</dbReference>
<dbReference type="PANTHER" id="PTHR12903">
    <property type="entry name" value="MITOCHONDRIAL RIBOSOMAL PROTEIN L24"/>
    <property type="match status" value="1"/>
</dbReference>
<dbReference type="Pfam" id="PF00467">
    <property type="entry name" value="KOW"/>
    <property type="match status" value="1"/>
</dbReference>
<dbReference type="Pfam" id="PF17136">
    <property type="entry name" value="ribosomal_L24"/>
    <property type="match status" value="1"/>
</dbReference>
<dbReference type="SMART" id="SM00739">
    <property type="entry name" value="KOW"/>
    <property type="match status" value="1"/>
</dbReference>
<dbReference type="SUPFAM" id="SSF50104">
    <property type="entry name" value="Translation proteins SH3-like domain"/>
    <property type="match status" value="1"/>
</dbReference>
<dbReference type="PROSITE" id="PS01108">
    <property type="entry name" value="RIBOSOMAL_L24"/>
    <property type="match status" value="1"/>
</dbReference>
<sequence>MHVKKGDKVQVITGKDKGKQGVILVAFPKQNRVIVEGVNIVKKHSKPSQLNPQGGIITKEAPIHVSNVMILDPKTGEPTRVGFKVEDGKKVRIAKKSGELLDK</sequence>
<feature type="chain" id="PRO_0000241563" description="Large ribosomal subunit protein uL24">
    <location>
        <begin position="1"/>
        <end position="103"/>
    </location>
</feature>
<organism>
    <name type="scientific">Bacillus cereus (strain ZK / E33L)</name>
    <dbReference type="NCBI Taxonomy" id="288681"/>
    <lineage>
        <taxon>Bacteria</taxon>
        <taxon>Bacillati</taxon>
        <taxon>Bacillota</taxon>
        <taxon>Bacilli</taxon>
        <taxon>Bacillales</taxon>
        <taxon>Bacillaceae</taxon>
        <taxon>Bacillus</taxon>
        <taxon>Bacillus cereus group</taxon>
    </lineage>
</organism>
<proteinExistence type="inferred from homology"/>
<name>RL24_BACCZ</name>
<gene>
    <name evidence="1" type="primary">rplX</name>
    <name type="ordered locus">BCE33L0115</name>
</gene>
<accession>Q63H79</accession>
<keyword id="KW-0687">Ribonucleoprotein</keyword>
<keyword id="KW-0689">Ribosomal protein</keyword>
<keyword id="KW-0694">RNA-binding</keyword>
<keyword id="KW-0699">rRNA-binding</keyword>